<dbReference type="EC" id="5.3.1.25" evidence="1"/>
<dbReference type="EMBL" id="BA000037">
    <property type="protein sequence ID" value="BAC94943.1"/>
    <property type="molecule type" value="Genomic_DNA"/>
</dbReference>
<dbReference type="RefSeq" id="WP_011150692.1">
    <property type="nucleotide sequence ID" value="NC_005139.1"/>
</dbReference>
<dbReference type="SMR" id="Q7MJI2"/>
<dbReference type="STRING" id="672.VV93_v1c19200"/>
<dbReference type="KEGG" id="vvy:VV2179"/>
<dbReference type="PATRIC" id="fig|196600.6.peg.2196"/>
<dbReference type="eggNOG" id="COG2407">
    <property type="taxonomic scope" value="Bacteria"/>
</dbReference>
<dbReference type="HOGENOM" id="CLU_033326_1_0_6"/>
<dbReference type="UniPathway" id="UPA00563">
    <property type="reaction ID" value="UER00624"/>
</dbReference>
<dbReference type="Proteomes" id="UP000002675">
    <property type="component" value="Chromosome I"/>
</dbReference>
<dbReference type="GO" id="GO:0005737">
    <property type="term" value="C:cytoplasm"/>
    <property type="evidence" value="ECO:0007669"/>
    <property type="project" value="UniProtKB-SubCell"/>
</dbReference>
<dbReference type="GO" id="GO:0008790">
    <property type="term" value="F:arabinose isomerase activity"/>
    <property type="evidence" value="ECO:0007669"/>
    <property type="project" value="TreeGrafter"/>
</dbReference>
<dbReference type="GO" id="GO:0008736">
    <property type="term" value="F:L-fucose isomerase activity"/>
    <property type="evidence" value="ECO:0007669"/>
    <property type="project" value="UniProtKB-UniRule"/>
</dbReference>
<dbReference type="GO" id="GO:0030145">
    <property type="term" value="F:manganese ion binding"/>
    <property type="evidence" value="ECO:0007669"/>
    <property type="project" value="UniProtKB-UniRule"/>
</dbReference>
<dbReference type="GO" id="GO:0019571">
    <property type="term" value="P:D-arabinose catabolic process"/>
    <property type="evidence" value="ECO:0007669"/>
    <property type="project" value="TreeGrafter"/>
</dbReference>
<dbReference type="GO" id="GO:0042355">
    <property type="term" value="P:L-fucose catabolic process"/>
    <property type="evidence" value="ECO:0007669"/>
    <property type="project" value="UniProtKB-UniRule"/>
</dbReference>
<dbReference type="FunFam" id="3.40.50.1070:FF:000001">
    <property type="entry name" value="L-fucose isomerase"/>
    <property type="match status" value="1"/>
</dbReference>
<dbReference type="Gene3D" id="3.40.50.1070">
    <property type="match status" value="1"/>
</dbReference>
<dbReference type="Gene3D" id="3.40.275.10">
    <property type="entry name" value="L-fucose Isomerase, Chain A, domain 2"/>
    <property type="match status" value="1"/>
</dbReference>
<dbReference type="Gene3D" id="3.20.14.10">
    <property type="entry name" value="L-fucose/L-arabinose isomerase, C-terminal"/>
    <property type="match status" value="1"/>
</dbReference>
<dbReference type="HAMAP" id="MF_01254">
    <property type="entry name" value="Fucose_iso"/>
    <property type="match status" value="1"/>
</dbReference>
<dbReference type="InterPro" id="IPR004216">
    <property type="entry name" value="Fuc/Ara_isomerase_C"/>
</dbReference>
<dbReference type="InterPro" id="IPR038393">
    <property type="entry name" value="Fuc_iso_dom3_sf"/>
</dbReference>
<dbReference type="InterPro" id="IPR015888">
    <property type="entry name" value="Fuc_isomerase_C"/>
</dbReference>
<dbReference type="InterPro" id="IPR038391">
    <property type="entry name" value="Fucose_iso_dom1_sf"/>
</dbReference>
<dbReference type="InterPro" id="IPR012888">
    <property type="entry name" value="Fucose_iso_N1"/>
</dbReference>
<dbReference type="InterPro" id="IPR005763">
    <property type="entry name" value="Fucose_isomerase"/>
</dbReference>
<dbReference type="InterPro" id="IPR038392">
    <property type="entry name" value="Fucose_isomerase_dom2_sf"/>
</dbReference>
<dbReference type="InterPro" id="IPR009015">
    <property type="entry name" value="Fucose_isomerase_N/cen_sf"/>
</dbReference>
<dbReference type="InterPro" id="IPR012889">
    <property type="entry name" value="Fucose_isomerase_N2"/>
</dbReference>
<dbReference type="NCBIfam" id="TIGR01089">
    <property type="entry name" value="fucI"/>
    <property type="match status" value="1"/>
</dbReference>
<dbReference type="NCBIfam" id="NF008220">
    <property type="entry name" value="PRK10991.1"/>
    <property type="match status" value="1"/>
</dbReference>
<dbReference type="PANTHER" id="PTHR37840">
    <property type="entry name" value="L-FUCOSE ISOMERASE"/>
    <property type="match status" value="1"/>
</dbReference>
<dbReference type="PANTHER" id="PTHR37840:SF1">
    <property type="entry name" value="L-FUCOSE ISOMERASE"/>
    <property type="match status" value="1"/>
</dbReference>
<dbReference type="Pfam" id="PF02952">
    <property type="entry name" value="Fucose_iso_C"/>
    <property type="match status" value="1"/>
</dbReference>
<dbReference type="Pfam" id="PF07881">
    <property type="entry name" value="Fucose_iso_N1"/>
    <property type="match status" value="1"/>
</dbReference>
<dbReference type="Pfam" id="PF07882">
    <property type="entry name" value="Fucose_iso_N2"/>
    <property type="match status" value="1"/>
</dbReference>
<dbReference type="SUPFAM" id="SSF50443">
    <property type="entry name" value="FucI/AraA C-terminal domain-like"/>
    <property type="match status" value="1"/>
</dbReference>
<dbReference type="SUPFAM" id="SSF53743">
    <property type="entry name" value="FucI/AraA N-terminal and middle domains"/>
    <property type="match status" value="1"/>
</dbReference>
<gene>
    <name evidence="1" type="primary">fucI</name>
    <name type="ordered locus">VV2179</name>
</gene>
<sequence length="582" mass="64482">MSNLVKIGIRPTIDGRRLGVRESLEEQTMNMAKNLANFIAENVRHVSGDAVECVIADSTIGGVAEAAACADKFKRENVGLSITVTPCWCYGTETIDMDPHMPKAIWGFNGTERPGAVYLAAAMAGHSQVGLPAFSIYGEEVQDKDDTSIPSDVQEKILRFCRAGLTVATIRGKSYLSMGSVSMGIAGSIVDQPFFQHYLGMRNEYVDMTEIKRRLDREIFDKEEFELAMAWTKEHCHEGKDYNREPMSEARKQEDWQTVVKMTMIMRDLMEGNPKLAEMGFGEEALGHNAVVGGFQGQRHWTDHLPNGDFSEAILNSSFDWNGIREPFVIATENDSLNGVNMLFGKMLTGQAQVFCDVRTYWSADSVERVSGYRPESGFIHLVNSGSAALDGCGEAKLTSGESAIKPHWQMSAQDAEACLSATKWPPADVEYFRGGGFSSNFLTHGGMPFTMHRINIIKGIGPVLQIAEGHSITLPQEVHETLNERTNPTWPTTWFVPRLNDEGAFKDVYSVMANWGANHCVITYGHVGADLITLASMLRIPVAMHNVEESDVFRPHTWSAFGQDKEGQDYRACATFGPLYK</sequence>
<reference key="1">
    <citation type="journal article" date="2003" name="Genome Res.">
        <title>Comparative genome analysis of Vibrio vulnificus, a marine pathogen.</title>
        <authorList>
            <person name="Chen C.-Y."/>
            <person name="Wu K.-M."/>
            <person name="Chang Y.-C."/>
            <person name="Chang C.-H."/>
            <person name="Tsai H.-C."/>
            <person name="Liao T.-L."/>
            <person name="Liu Y.-M."/>
            <person name="Chen H.-J."/>
            <person name="Shen A.B.-T."/>
            <person name="Li J.-C."/>
            <person name="Su T.-L."/>
            <person name="Shao C.-P."/>
            <person name="Lee C.-T."/>
            <person name="Hor L.-I."/>
            <person name="Tsai S.-F."/>
        </authorList>
    </citation>
    <scope>NUCLEOTIDE SEQUENCE [LARGE SCALE GENOMIC DNA]</scope>
    <source>
        <strain>YJ016</strain>
    </source>
</reference>
<keyword id="KW-0119">Carbohydrate metabolism</keyword>
<keyword id="KW-0963">Cytoplasm</keyword>
<keyword id="KW-0294">Fucose metabolism</keyword>
<keyword id="KW-0413">Isomerase</keyword>
<keyword id="KW-0464">Manganese</keyword>
<keyword id="KW-0479">Metal-binding</keyword>
<proteinExistence type="inferred from homology"/>
<name>FUCI_VIBVY</name>
<accession>Q7MJI2</accession>
<protein>
    <recommendedName>
        <fullName evidence="1">L-fucose isomerase</fullName>
        <ecNumber evidence="1">5.3.1.25</ecNumber>
    </recommendedName>
    <alternativeName>
        <fullName evidence="1">6-deoxy-L-galactose isomerase</fullName>
    </alternativeName>
    <alternativeName>
        <fullName>FucIase</fullName>
    </alternativeName>
</protein>
<comment type="function">
    <text evidence="1">Converts the aldose L-fucose into the corresponding ketose L-fuculose.</text>
</comment>
<comment type="catalytic activity">
    <reaction evidence="1">
        <text>L-fucose = L-fuculose</text>
        <dbReference type="Rhea" id="RHEA:17233"/>
        <dbReference type="ChEBI" id="CHEBI:2181"/>
        <dbReference type="ChEBI" id="CHEBI:17617"/>
        <dbReference type="EC" id="5.3.1.25"/>
    </reaction>
</comment>
<comment type="cofactor">
    <cofactor evidence="1">
        <name>Mn(2+)</name>
        <dbReference type="ChEBI" id="CHEBI:29035"/>
    </cofactor>
</comment>
<comment type="pathway">
    <text evidence="1">Carbohydrate degradation; L-fucose degradation; L-lactaldehyde and glycerone phosphate from L-fucose: step 1/3.</text>
</comment>
<comment type="subcellular location">
    <subcellularLocation>
        <location evidence="1">Cytoplasm</location>
    </subcellularLocation>
</comment>
<comment type="similarity">
    <text evidence="1">Belongs to the L-fucose isomerase family.</text>
</comment>
<organism>
    <name type="scientific">Vibrio vulnificus (strain YJ016)</name>
    <dbReference type="NCBI Taxonomy" id="196600"/>
    <lineage>
        <taxon>Bacteria</taxon>
        <taxon>Pseudomonadati</taxon>
        <taxon>Pseudomonadota</taxon>
        <taxon>Gammaproteobacteria</taxon>
        <taxon>Vibrionales</taxon>
        <taxon>Vibrionaceae</taxon>
        <taxon>Vibrio</taxon>
    </lineage>
</organism>
<evidence type="ECO:0000255" key="1">
    <source>
        <dbReference type="HAMAP-Rule" id="MF_01254"/>
    </source>
</evidence>
<feature type="chain" id="PRO_0000204154" description="L-fucose isomerase">
    <location>
        <begin position="1"/>
        <end position="582"/>
    </location>
</feature>
<feature type="active site" description="Proton acceptor" evidence="1">
    <location>
        <position position="333"/>
    </location>
</feature>
<feature type="active site" description="Proton acceptor" evidence="1">
    <location>
        <position position="357"/>
    </location>
</feature>
<feature type="binding site" evidence="1">
    <location>
        <position position="333"/>
    </location>
    <ligand>
        <name>Mn(2+)</name>
        <dbReference type="ChEBI" id="CHEBI:29035"/>
    </ligand>
</feature>
<feature type="binding site" evidence="1">
    <location>
        <position position="357"/>
    </location>
    <ligand>
        <name>Mn(2+)</name>
        <dbReference type="ChEBI" id="CHEBI:29035"/>
    </ligand>
</feature>
<feature type="binding site" evidence="1">
    <location>
        <position position="520"/>
    </location>
    <ligand>
        <name>Mn(2+)</name>
        <dbReference type="ChEBI" id="CHEBI:29035"/>
    </ligand>
</feature>